<keyword id="KW-1003">Cell membrane</keyword>
<keyword id="KW-0967">Endosome</keyword>
<keyword id="KW-0342">GTP-binding</keyword>
<keyword id="KW-0378">Hydrolase</keyword>
<keyword id="KW-0449">Lipoprotein</keyword>
<keyword id="KW-0460">Magnesium</keyword>
<keyword id="KW-0472">Membrane</keyword>
<keyword id="KW-0479">Metal-binding</keyword>
<keyword id="KW-0547">Nucleotide-binding</keyword>
<keyword id="KW-0597">Phosphoprotein</keyword>
<keyword id="KW-0636">Prenylation</keyword>
<keyword id="KW-0653">Protein transport</keyword>
<keyword id="KW-1185">Reference proteome</keyword>
<keyword id="KW-0813">Transport</keyword>
<evidence type="ECO:0000250" key="1">
    <source>
        <dbReference type="UniProtKB" id="P20339"/>
    </source>
</evidence>
<evidence type="ECO:0000250" key="2">
    <source>
        <dbReference type="UniProtKB" id="P51148"/>
    </source>
</evidence>
<evidence type="ECO:0000256" key="3">
    <source>
        <dbReference type="SAM" id="MobiDB-lite"/>
    </source>
</evidence>
<evidence type="ECO:0000305" key="4"/>
<organism>
    <name type="scientific">Bos taurus</name>
    <name type="common">Bovine</name>
    <dbReference type="NCBI Taxonomy" id="9913"/>
    <lineage>
        <taxon>Eukaryota</taxon>
        <taxon>Metazoa</taxon>
        <taxon>Chordata</taxon>
        <taxon>Craniata</taxon>
        <taxon>Vertebrata</taxon>
        <taxon>Euteleostomi</taxon>
        <taxon>Mammalia</taxon>
        <taxon>Eutheria</taxon>
        <taxon>Laurasiatheria</taxon>
        <taxon>Artiodactyla</taxon>
        <taxon>Ruminantia</taxon>
        <taxon>Pecora</taxon>
        <taxon>Bovidae</taxon>
        <taxon>Bovinae</taxon>
        <taxon>Bos</taxon>
    </lineage>
</organism>
<dbReference type="EC" id="3.6.5.2" evidence="1"/>
<dbReference type="EMBL" id="BT021518">
    <property type="protein sequence ID" value="AAX46365.1"/>
    <property type="molecule type" value="mRNA"/>
</dbReference>
<dbReference type="EMBL" id="BC118226">
    <property type="protein sequence ID" value="AAI18227.1"/>
    <property type="molecule type" value="mRNA"/>
</dbReference>
<dbReference type="RefSeq" id="NP_001029915.1">
    <property type="nucleotide sequence ID" value="NM_001034743.2"/>
</dbReference>
<dbReference type="RefSeq" id="XP_005220807.1">
    <property type="nucleotide sequence ID" value="XM_005220750.4"/>
</dbReference>
<dbReference type="RefSeq" id="XP_005220808.1">
    <property type="nucleotide sequence ID" value="XM_005220751.5"/>
</dbReference>
<dbReference type="SMR" id="Q58DS9"/>
<dbReference type="FunCoup" id="Q58DS9">
    <property type="interactions" value="4433"/>
</dbReference>
<dbReference type="STRING" id="9913.ENSBTAP00000067284"/>
<dbReference type="PaxDb" id="9913-ENSBTAP00000015581"/>
<dbReference type="PeptideAtlas" id="Q58DS9"/>
<dbReference type="GeneID" id="613749"/>
<dbReference type="KEGG" id="bta:613749"/>
<dbReference type="CTD" id="5878"/>
<dbReference type="VEuPathDB" id="HostDB:ENSBTAG00000006982"/>
<dbReference type="eggNOG" id="KOG0092">
    <property type="taxonomic scope" value="Eukaryota"/>
</dbReference>
<dbReference type="HOGENOM" id="CLU_041217_10_2_1"/>
<dbReference type="InParanoid" id="Q58DS9"/>
<dbReference type="OrthoDB" id="63533at2759"/>
<dbReference type="TreeFam" id="TF300199"/>
<dbReference type="Proteomes" id="UP000009136">
    <property type="component" value="Chromosome 19"/>
</dbReference>
<dbReference type="Bgee" id="ENSBTAG00000006982">
    <property type="expression patterns" value="Expressed in monocyte and 107 other cell types or tissues"/>
</dbReference>
<dbReference type="GO" id="GO:0031901">
    <property type="term" value="C:early endosome membrane"/>
    <property type="evidence" value="ECO:0007669"/>
    <property type="project" value="UniProtKB-SubCell"/>
</dbReference>
<dbReference type="GO" id="GO:0042470">
    <property type="term" value="C:melanosome"/>
    <property type="evidence" value="ECO:0007669"/>
    <property type="project" value="UniProtKB-SubCell"/>
</dbReference>
<dbReference type="GO" id="GO:0005886">
    <property type="term" value="C:plasma membrane"/>
    <property type="evidence" value="ECO:0007669"/>
    <property type="project" value="UniProtKB-SubCell"/>
</dbReference>
<dbReference type="GO" id="GO:0003925">
    <property type="term" value="F:G protein activity"/>
    <property type="evidence" value="ECO:0007669"/>
    <property type="project" value="UniProtKB-EC"/>
</dbReference>
<dbReference type="GO" id="GO:0019003">
    <property type="term" value="F:GDP binding"/>
    <property type="evidence" value="ECO:0000250"/>
    <property type="project" value="UniProtKB"/>
</dbReference>
<dbReference type="GO" id="GO:0005525">
    <property type="term" value="F:GTP binding"/>
    <property type="evidence" value="ECO:0000318"/>
    <property type="project" value="GO_Central"/>
</dbReference>
<dbReference type="GO" id="GO:0003924">
    <property type="term" value="F:GTPase activity"/>
    <property type="evidence" value="ECO:0000318"/>
    <property type="project" value="GO_Central"/>
</dbReference>
<dbReference type="GO" id="GO:0015031">
    <property type="term" value="P:protein transport"/>
    <property type="evidence" value="ECO:0007669"/>
    <property type="project" value="UniProtKB-KW"/>
</dbReference>
<dbReference type="GO" id="GO:0016192">
    <property type="term" value="P:vesicle-mediated transport"/>
    <property type="evidence" value="ECO:0000318"/>
    <property type="project" value="GO_Central"/>
</dbReference>
<dbReference type="CDD" id="cd01860">
    <property type="entry name" value="Rab5_related"/>
    <property type="match status" value="1"/>
</dbReference>
<dbReference type="FunFam" id="3.40.50.300:FF:000180">
    <property type="entry name" value="Member RAS oncogene family"/>
    <property type="match status" value="1"/>
</dbReference>
<dbReference type="Gene3D" id="3.40.50.300">
    <property type="entry name" value="P-loop containing nucleotide triphosphate hydrolases"/>
    <property type="match status" value="1"/>
</dbReference>
<dbReference type="InterPro" id="IPR027417">
    <property type="entry name" value="P-loop_NTPase"/>
</dbReference>
<dbReference type="InterPro" id="IPR005225">
    <property type="entry name" value="Small_GTP-bd"/>
</dbReference>
<dbReference type="InterPro" id="IPR001806">
    <property type="entry name" value="Small_GTPase"/>
</dbReference>
<dbReference type="NCBIfam" id="TIGR00231">
    <property type="entry name" value="small_GTP"/>
    <property type="match status" value="1"/>
</dbReference>
<dbReference type="PANTHER" id="PTHR47978">
    <property type="match status" value="1"/>
</dbReference>
<dbReference type="Pfam" id="PF00071">
    <property type="entry name" value="Ras"/>
    <property type="match status" value="1"/>
</dbReference>
<dbReference type="PRINTS" id="PR00449">
    <property type="entry name" value="RASTRNSFRMNG"/>
</dbReference>
<dbReference type="SMART" id="SM00175">
    <property type="entry name" value="RAB"/>
    <property type="match status" value="1"/>
</dbReference>
<dbReference type="SMART" id="SM00176">
    <property type="entry name" value="RAN"/>
    <property type="match status" value="1"/>
</dbReference>
<dbReference type="SMART" id="SM00173">
    <property type="entry name" value="RAS"/>
    <property type="match status" value="1"/>
</dbReference>
<dbReference type="SMART" id="SM00174">
    <property type="entry name" value="RHO"/>
    <property type="match status" value="1"/>
</dbReference>
<dbReference type="SUPFAM" id="SSF52540">
    <property type="entry name" value="P-loop containing nucleoside triphosphate hydrolases"/>
    <property type="match status" value="1"/>
</dbReference>
<dbReference type="PROSITE" id="PS51419">
    <property type="entry name" value="RAB"/>
    <property type="match status" value="1"/>
</dbReference>
<accession>Q58DS9</accession>
<accession>Q17QR1</accession>
<sequence>MAGRGGAARPNGPAAGNKICQFKLVLLGESAVGKSSLVLRFVKGQFHEYQESTIGAAFLTQTVCLDDTTVKFEIWDTAGQERYHSLAPMYYRGAQAAIVVYDITNTDTFARAKNWVKELQRQASPNIVIALAGNKADLASKRAVEFQEAQAYAEDNSLLFMETSAKTAMNVNEIFMAIAKKLPKNEPQNAAGAPGRNRGVDLQENNPASRSQCCSN</sequence>
<name>RAB5C_BOVIN</name>
<feature type="chain" id="PRO_0000226291" description="Ras-related protein Rab-5C">
    <location>
        <begin position="1"/>
        <end position="216"/>
    </location>
</feature>
<feature type="region of interest" description="Disordered" evidence="3">
    <location>
        <begin position="185"/>
        <end position="216"/>
    </location>
</feature>
<feature type="short sequence motif" description="Switch 1" evidence="1">
    <location>
        <begin position="45"/>
        <end position="57"/>
    </location>
</feature>
<feature type="short sequence motif" description="Switch 2" evidence="1">
    <location>
        <begin position="78"/>
        <end position="94"/>
    </location>
</feature>
<feature type="compositionally biased region" description="Polar residues" evidence="3">
    <location>
        <begin position="203"/>
        <end position="216"/>
    </location>
</feature>
<feature type="binding site" evidence="1">
    <location>
        <position position="30"/>
    </location>
    <ligand>
        <name>GTP</name>
        <dbReference type="ChEBI" id="CHEBI:37565"/>
    </ligand>
</feature>
<feature type="binding site" evidence="1">
    <location>
        <position position="31"/>
    </location>
    <ligand>
        <name>GTP</name>
        <dbReference type="ChEBI" id="CHEBI:37565"/>
    </ligand>
</feature>
<feature type="binding site" evidence="1">
    <location>
        <position position="33"/>
    </location>
    <ligand>
        <name>GTP</name>
        <dbReference type="ChEBI" id="CHEBI:37565"/>
    </ligand>
</feature>
<feature type="binding site" evidence="1">
    <location>
        <position position="34"/>
    </location>
    <ligand>
        <name>GTP</name>
        <dbReference type="ChEBI" id="CHEBI:37565"/>
    </ligand>
</feature>
<feature type="binding site" evidence="1">
    <location>
        <position position="35"/>
    </location>
    <ligand>
        <name>GTP</name>
        <dbReference type="ChEBI" id="CHEBI:37565"/>
    </ligand>
</feature>
<feature type="binding site" evidence="1">
    <location>
        <position position="35"/>
    </location>
    <ligand>
        <name>Mg(2+)</name>
        <dbReference type="ChEBI" id="CHEBI:18420"/>
    </ligand>
</feature>
<feature type="binding site" evidence="1">
    <location>
        <position position="36"/>
    </location>
    <ligand>
        <name>GTP</name>
        <dbReference type="ChEBI" id="CHEBI:37565"/>
    </ligand>
</feature>
<feature type="binding site" evidence="1">
    <location>
        <position position="47"/>
    </location>
    <ligand>
        <name>GTP</name>
        <dbReference type="ChEBI" id="CHEBI:37565"/>
    </ligand>
</feature>
<feature type="binding site" evidence="1">
    <location>
        <position position="48"/>
    </location>
    <ligand>
        <name>GTP</name>
        <dbReference type="ChEBI" id="CHEBI:37565"/>
    </ligand>
</feature>
<feature type="binding site" evidence="1">
    <location>
        <position position="53"/>
    </location>
    <ligand>
        <name>GTP</name>
        <dbReference type="ChEBI" id="CHEBI:37565"/>
    </ligand>
</feature>
<feature type="binding site" evidence="1">
    <location>
        <position position="53"/>
    </location>
    <ligand>
        <name>Mg(2+)</name>
        <dbReference type="ChEBI" id="CHEBI:18420"/>
    </ligand>
</feature>
<feature type="binding site" evidence="1">
    <location>
        <position position="79"/>
    </location>
    <ligand>
        <name>GTP</name>
        <dbReference type="ChEBI" id="CHEBI:37565"/>
    </ligand>
</feature>
<feature type="binding site" evidence="1">
    <location>
        <position position="134"/>
    </location>
    <ligand>
        <name>GTP</name>
        <dbReference type="ChEBI" id="CHEBI:37565"/>
    </ligand>
</feature>
<feature type="binding site" evidence="1">
    <location>
        <position position="135"/>
    </location>
    <ligand>
        <name>GTP</name>
        <dbReference type="ChEBI" id="CHEBI:37565"/>
    </ligand>
</feature>
<feature type="binding site" evidence="1">
    <location>
        <position position="137"/>
    </location>
    <ligand>
        <name>GTP</name>
        <dbReference type="ChEBI" id="CHEBI:37565"/>
    </ligand>
</feature>
<feature type="binding site" evidence="1">
    <location>
        <position position="165"/>
    </location>
    <ligand>
        <name>GTP</name>
        <dbReference type="ChEBI" id="CHEBI:37565"/>
    </ligand>
</feature>
<feature type="binding site" evidence="1">
    <location>
        <position position="166"/>
    </location>
    <ligand>
        <name>GTP</name>
        <dbReference type="ChEBI" id="CHEBI:37565"/>
    </ligand>
</feature>
<feature type="modified residue" description="Phosphoserine" evidence="2">
    <location>
        <position position="85"/>
    </location>
</feature>
<feature type="lipid moiety-binding region" description="S-geranylgeranyl cysteine" evidence="1">
    <location>
        <position position="213"/>
    </location>
</feature>
<feature type="lipid moiety-binding region" description="S-geranylgeranyl cysteine" evidence="1">
    <location>
        <position position="214"/>
    </location>
</feature>
<gene>
    <name type="primary">RAB5C</name>
</gene>
<reference key="1">
    <citation type="journal article" date="2005" name="BMC Genomics">
        <title>Characterization of 954 bovine full-CDS cDNA sequences.</title>
        <authorList>
            <person name="Harhay G.P."/>
            <person name="Sonstegard T.S."/>
            <person name="Keele J.W."/>
            <person name="Heaton M.P."/>
            <person name="Clawson M.L."/>
            <person name="Snelling W.M."/>
            <person name="Wiedmann R.T."/>
            <person name="Van Tassell C.P."/>
            <person name="Smith T.P.L."/>
        </authorList>
    </citation>
    <scope>NUCLEOTIDE SEQUENCE [LARGE SCALE MRNA]</scope>
</reference>
<reference key="2">
    <citation type="submission" date="2006-06" db="EMBL/GenBank/DDBJ databases">
        <authorList>
            <consortium name="NIH - Mammalian Gene Collection (MGC) project"/>
        </authorList>
    </citation>
    <scope>NUCLEOTIDE SEQUENCE [LARGE SCALE MRNA]</scope>
    <source>
        <strain>Hereford</strain>
        <tissue>Hippocampus</tissue>
    </source>
</reference>
<protein>
    <recommendedName>
        <fullName>Ras-related protein Rab-5C</fullName>
        <ecNumber evidence="1">3.6.5.2</ecNumber>
    </recommendedName>
</protein>
<comment type="function">
    <text evidence="1">The small GTPases Rab are key regulators of intracellular membrane trafficking, from the formation of transport vesicles to their fusion with membranes. Rabs cycle between an inactive GDP-bound form and an active GTP-bound form that is able to recruit to membranes different sets of downstream effectors directly responsible for vesicle formation, movement, tethering and fusion.</text>
</comment>
<comment type="catalytic activity">
    <reaction evidence="1">
        <text>GTP + H2O = GDP + phosphate + H(+)</text>
        <dbReference type="Rhea" id="RHEA:19669"/>
        <dbReference type="ChEBI" id="CHEBI:15377"/>
        <dbReference type="ChEBI" id="CHEBI:15378"/>
        <dbReference type="ChEBI" id="CHEBI:37565"/>
        <dbReference type="ChEBI" id="CHEBI:43474"/>
        <dbReference type="ChEBI" id="CHEBI:58189"/>
        <dbReference type="EC" id="3.6.5.2"/>
    </reaction>
    <physiologicalReaction direction="left-to-right" evidence="1">
        <dbReference type="Rhea" id="RHEA:19670"/>
    </physiologicalReaction>
</comment>
<comment type="cofactor">
    <cofactor evidence="1">
        <name>Mg(2+)</name>
        <dbReference type="ChEBI" id="CHEBI:18420"/>
    </cofactor>
</comment>
<comment type="activity regulation">
    <text evidence="4">Regulated by guanine nucleotide exchange factors (GEFs) which promote the exchange of bound GDP for free GTP (Probable). Regulated by GTPase activating proteins (GAPs) which increase the GTP hydrolysis activity (Probable). Inhibited by GDP dissociation inhibitors (GDIs) (Probable).</text>
</comment>
<comment type="subunit">
    <text evidence="2">Interacts with EEA1 and INCA1 (By similarity). Interacts with GDI1, GDI2, CHML and CHM; phosphorylation at Ser-85 disrupts this interaction (By similarity).</text>
</comment>
<comment type="subcellular location">
    <subcellularLocation>
        <location evidence="1">Cell membrane</location>
        <topology evidence="1">Lipid-anchor</topology>
        <orientation evidence="1">Cytoplasmic side</orientation>
    </subcellularLocation>
    <subcellularLocation>
        <location evidence="1">Early endosome membrane</location>
        <topology evidence="1">Lipid-anchor</topology>
    </subcellularLocation>
    <subcellularLocation>
        <location evidence="2">Melanosome</location>
    </subcellularLocation>
</comment>
<comment type="domain">
    <text evidence="1">Switch 1, switch 2 and the interswitch regions are characteristic of Rab GTPases and mediate the interactions with Rab downstream effectors. The switch regions undergo conformational changes upon nucleotide binding which drive interaction with specific sets of effector proteins, with most effectors only binding to GTP-bound Rab.</text>
</comment>
<comment type="PTM">
    <text evidence="2">Phosphorylation of Ser-85 in the switch II region by LRRK2 prevents the association of RAB regulatory proteins, including CHM, CHML and RAB GDP dissociation inhibitors GDI1 and GDI2.</text>
</comment>
<comment type="similarity">
    <text evidence="4">Belongs to the small GTPase superfamily. Rab family.</text>
</comment>
<proteinExistence type="evidence at transcript level"/>